<dbReference type="EC" id="3.1.3.11" evidence="1"/>
<dbReference type="EMBL" id="CP000644">
    <property type="protein sequence ID" value="ABO89955.1"/>
    <property type="molecule type" value="Genomic_DNA"/>
</dbReference>
<dbReference type="RefSeq" id="WP_005315352.1">
    <property type="nucleotide sequence ID" value="NC_009348.1"/>
</dbReference>
<dbReference type="SMR" id="A4SM33"/>
<dbReference type="STRING" id="29491.GCA_000820065_02732"/>
<dbReference type="GeneID" id="79879604"/>
<dbReference type="KEGG" id="asa:ASA_1880"/>
<dbReference type="eggNOG" id="COG0158">
    <property type="taxonomic scope" value="Bacteria"/>
</dbReference>
<dbReference type="HOGENOM" id="CLU_039977_2_2_6"/>
<dbReference type="UniPathway" id="UPA00138"/>
<dbReference type="Proteomes" id="UP000000225">
    <property type="component" value="Chromosome"/>
</dbReference>
<dbReference type="GO" id="GO:0005829">
    <property type="term" value="C:cytosol"/>
    <property type="evidence" value="ECO:0007669"/>
    <property type="project" value="TreeGrafter"/>
</dbReference>
<dbReference type="GO" id="GO:0042132">
    <property type="term" value="F:fructose 1,6-bisphosphate 1-phosphatase activity"/>
    <property type="evidence" value="ECO:0007669"/>
    <property type="project" value="UniProtKB-UniRule"/>
</dbReference>
<dbReference type="GO" id="GO:0000287">
    <property type="term" value="F:magnesium ion binding"/>
    <property type="evidence" value="ECO:0007669"/>
    <property type="project" value="UniProtKB-UniRule"/>
</dbReference>
<dbReference type="GO" id="GO:0030388">
    <property type="term" value="P:fructose 1,6-bisphosphate metabolic process"/>
    <property type="evidence" value="ECO:0007669"/>
    <property type="project" value="TreeGrafter"/>
</dbReference>
<dbReference type="GO" id="GO:0006002">
    <property type="term" value="P:fructose 6-phosphate metabolic process"/>
    <property type="evidence" value="ECO:0007669"/>
    <property type="project" value="TreeGrafter"/>
</dbReference>
<dbReference type="GO" id="GO:0006000">
    <property type="term" value="P:fructose metabolic process"/>
    <property type="evidence" value="ECO:0007669"/>
    <property type="project" value="TreeGrafter"/>
</dbReference>
<dbReference type="GO" id="GO:0006094">
    <property type="term" value="P:gluconeogenesis"/>
    <property type="evidence" value="ECO:0007669"/>
    <property type="project" value="UniProtKB-UniRule"/>
</dbReference>
<dbReference type="GO" id="GO:0005986">
    <property type="term" value="P:sucrose biosynthetic process"/>
    <property type="evidence" value="ECO:0007669"/>
    <property type="project" value="TreeGrafter"/>
</dbReference>
<dbReference type="CDD" id="cd00354">
    <property type="entry name" value="FBPase"/>
    <property type="match status" value="1"/>
</dbReference>
<dbReference type="FunFam" id="3.30.540.10:FF:000002">
    <property type="entry name" value="Fructose-1,6-bisphosphatase class 1"/>
    <property type="match status" value="1"/>
</dbReference>
<dbReference type="FunFam" id="3.40.190.80:FF:000001">
    <property type="entry name" value="Fructose-1,6-bisphosphatase class 1"/>
    <property type="match status" value="1"/>
</dbReference>
<dbReference type="Gene3D" id="3.40.190.80">
    <property type="match status" value="1"/>
</dbReference>
<dbReference type="Gene3D" id="3.30.540.10">
    <property type="entry name" value="Fructose-1,6-Bisphosphatase, subunit A, domain 1"/>
    <property type="match status" value="1"/>
</dbReference>
<dbReference type="HAMAP" id="MF_01855">
    <property type="entry name" value="FBPase_class1"/>
    <property type="match status" value="1"/>
</dbReference>
<dbReference type="InterPro" id="IPR044015">
    <property type="entry name" value="FBPase_C_dom"/>
</dbReference>
<dbReference type="InterPro" id="IPR000146">
    <property type="entry name" value="FBPase_class-1"/>
</dbReference>
<dbReference type="InterPro" id="IPR033391">
    <property type="entry name" value="FBPase_N"/>
</dbReference>
<dbReference type="InterPro" id="IPR028343">
    <property type="entry name" value="FBPtase"/>
</dbReference>
<dbReference type="InterPro" id="IPR020548">
    <property type="entry name" value="Fructose_bisphosphatase_AS"/>
</dbReference>
<dbReference type="NCBIfam" id="NF006778">
    <property type="entry name" value="PRK09293.1-1"/>
    <property type="match status" value="1"/>
</dbReference>
<dbReference type="NCBIfam" id="NF006779">
    <property type="entry name" value="PRK09293.1-3"/>
    <property type="match status" value="1"/>
</dbReference>
<dbReference type="PANTHER" id="PTHR11556">
    <property type="entry name" value="FRUCTOSE-1,6-BISPHOSPHATASE-RELATED"/>
    <property type="match status" value="1"/>
</dbReference>
<dbReference type="PANTHER" id="PTHR11556:SF35">
    <property type="entry name" value="SEDOHEPTULOSE-1,7-BISPHOSPHATASE, CHLOROPLASTIC"/>
    <property type="match status" value="1"/>
</dbReference>
<dbReference type="Pfam" id="PF00316">
    <property type="entry name" value="FBPase"/>
    <property type="match status" value="1"/>
</dbReference>
<dbReference type="Pfam" id="PF18913">
    <property type="entry name" value="FBPase_C"/>
    <property type="match status" value="1"/>
</dbReference>
<dbReference type="PIRSF" id="PIRSF500210">
    <property type="entry name" value="FBPtase"/>
    <property type="match status" value="1"/>
</dbReference>
<dbReference type="PIRSF" id="PIRSF000904">
    <property type="entry name" value="FBPtase_SBPase"/>
    <property type="match status" value="1"/>
</dbReference>
<dbReference type="PRINTS" id="PR00115">
    <property type="entry name" value="F16BPHPHTASE"/>
</dbReference>
<dbReference type="SUPFAM" id="SSF56655">
    <property type="entry name" value="Carbohydrate phosphatase"/>
    <property type="match status" value="1"/>
</dbReference>
<dbReference type="PROSITE" id="PS00124">
    <property type="entry name" value="FBPASE"/>
    <property type="match status" value="1"/>
</dbReference>
<name>F16PA_AERS4</name>
<sequence>MRNMITMGEFIVKKQADYPTATGELTSLLSSIRLAAKVVNREINKAGLADIIGSMGAENVQGEVQQKLDVYANERFKAALEARGEVCGIASEEEEDFVSFDSELSRHSKYVVLIDPLDGSSNIDVNVSVGTIFSIYRRLSAPGTGVTLEDFLQPGNRQVAAGYVVYGSSTMLVYTTGFGVNGFTYDPSIGCFCLSHENIRIPEEGKIYSINEGNYIKFPDGVKKYLKYCQERDEATHRPYTSRYIGSLVSDFHRNLLKGGIYIYPSGTNSPNGKLRLLYECNPMAFLVEQAGGKASDGFGRIMDIQPTALHQRTPYFVGSTKMVERAEAFMREFSAHEDPANQG</sequence>
<protein>
    <recommendedName>
        <fullName evidence="1">Fructose-1,6-bisphosphatase class 1</fullName>
        <shortName evidence="1">FBPase class 1</shortName>
        <ecNumber evidence="1">3.1.3.11</ecNumber>
    </recommendedName>
    <alternativeName>
        <fullName evidence="1">D-fructose-1,6-bisphosphate 1-phosphohydrolase class 1</fullName>
    </alternativeName>
</protein>
<comment type="catalytic activity">
    <reaction evidence="1">
        <text>beta-D-fructose 1,6-bisphosphate + H2O = beta-D-fructose 6-phosphate + phosphate</text>
        <dbReference type="Rhea" id="RHEA:11064"/>
        <dbReference type="ChEBI" id="CHEBI:15377"/>
        <dbReference type="ChEBI" id="CHEBI:32966"/>
        <dbReference type="ChEBI" id="CHEBI:43474"/>
        <dbReference type="ChEBI" id="CHEBI:57634"/>
        <dbReference type="EC" id="3.1.3.11"/>
    </reaction>
</comment>
<comment type="cofactor">
    <cofactor evidence="1">
        <name>Mg(2+)</name>
        <dbReference type="ChEBI" id="CHEBI:18420"/>
    </cofactor>
    <text evidence="1">Binds 2 magnesium ions per subunit.</text>
</comment>
<comment type="pathway">
    <text evidence="1">Carbohydrate biosynthesis; gluconeogenesis.</text>
</comment>
<comment type="subunit">
    <text evidence="1">Homotetramer.</text>
</comment>
<comment type="subcellular location">
    <subcellularLocation>
        <location evidence="1">Cytoplasm</location>
    </subcellularLocation>
</comment>
<comment type="similarity">
    <text evidence="1">Belongs to the FBPase class 1 family.</text>
</comment>
<evidence type="ECO:0000255" key="1">
    <source>
        <dbReference type="HAMAP-Rule" id="MF_01855"/>
    </source>
</evidence>
<organism>
    <name type="scientific">Aeromonas salmonicida (strain A449)</name>
    <dbReference type="NCBI Taxonomy" id="382245"/>
    <lineage>
        <taxon>Bacteria</taxon>
        <taxon>Pseudomonadati</taxon>
        <taxon>Pseudomonadota</taxon>
        <taxon>Gammaproteobacteria</taxon>
        <taxon>Aeromonadales</taxon>
        <taxon>Aeromonadaceae</taxon>
        <taxon>Aeromonas</taxon>
    </lineage>
</organism>
<accession>A4SM33</accession>
<keyword id="KW-0119">Carbohydrate metabolism</keyword>
<keyword id="KW-0963">Cytoplasm</keyword>
<keyword id="KW-0378">Hydrolase</keyword>
<keyword id="KW-0460">Magnesium</keyword>
<keyword id="KW-0479">Metal-binding</keyword>
<reference key="1">
    <citation type="journal article" date="2008" name="BMC Genomics">
        <title>The genome of Aeromonas salmonicida subsp. salmonicida A449: insights into the evolution of a fish pathogen.</title>
        <authorList>
            <person name="Reith M.E."/>
            <person name="Singh R.K."/>
            <person name="Curtis B."/>
            <person name="Boyd J.M."/>
            <person name="Bouevitch A."/>
            <person name="Kimball J."/>
            <person name="Munholland J."/>
            <person name="Murphy C."/>
            <person name="Sarty D."/>
            <person name="Williams J."/>
            <person name="Nash J.H."/>
            <person name="Johnson S.C."/>
            <person name="Brown L.L."/>
        </authorList>
    </citation>
    <scope>NUCLEOTIDE SEQUENCE [LARGE SCALE GENOMIC DNA]</scope>
    <source>
        <strain>A449</strain>
    </source>
</reference>
<proteinExistence type="inferred from homology"/>
<gene>
    <name evidence="1" type="primary">fbp</name>
    <name type="ordered locus">ASA_1880</name>
</gene>
<feature type="chain" id="PRO_0000364457" description="Fructose-1,6-bisphosphatase class 1">
    <location>
        <begin position="1"/>
        <end position="344"/>
    </location>
</feature>
<feature type="binding site" evidence="1">
    <location>
        <position position="92"/>
    </location>
    <ligand>
        <name>Mg(2+)</name>
        <dbReference type="ChEBI" id="CHEBI:18420"/>
        <label>1</label>
    </ligand>
</feature>
<feature type="binding site" evidence="1">
    <location>
        <position position="115"/>
    </location>
    <ligand>
        <name>Mg(2+)</name>
        <dbReference type="ChEBI" id="CHEBI:18420"/>
        <label>1</label>
    </ligand>
</feature>
<feature type="binding site" evidence="1">
    <location>
        <position position="115"/>
    </location>
    <ligand>
        <name>Mg(2+)</name>
        <dbReference type="ChEBI" id="CHEBI:18420"/>
        <label>2</label>
    </ligand>
</feature>
<feature type="binding site" evidence="1">
    <location>
        <position position="117"/>
    </location>
    <ligand>
        <name>Mg(2+)</name>
        <dbReference type="ChEBI" id="CHEBI:18420"/>
        <label>1</label>
    </ligand>
</feature>
<feature type="binding site" evidence="1">
    <location>
        <begin position="118"/>
        <end position="121"/>
    </location>
    <ligand>
        <name>substrate</name>
    </ligand>
</feature>
<feature type="binding site" evidence="1">
    <location>
        <position position="118"/>
    </location>
    <ligand>
        <name>Mg(2+)</name>
        <dbReference type="ChEBI" id="CHEBI:18420"/>
        <label>2</label>
    </ligand>
</feature>
<feature type="binding site" evidence="1">
    <location>
        <position position="211"/>
    </location>
    <ligand>
        <name>substrate</name>
    </ligand>
</feature>
<feature type="binding site" evidence="1">
    <location>
        <position position="244"/>
    </location>
    <ligand>
        <name>substrate</name>
    </ligand>
</feature>
<feature type="binding site" evidence="1">
    <location>
        <position position="274"/>
    </location>
    <ligand>
        <name>substrate</name>
    </ligand>
</feature>
<feature type="binding site" evidence="1">
    <location>
        <position position="280"/>
    </location>
    <ligand>
        <name>Mg(2+)</name>
        <dbReference type="ChEBI" id="CHEBI:18420"/>
        <label>2</label>
    </ligand>
</feature>